<name>CP302_DROME</name>
<comment type="function">
    <text evidence="2 3 4">Required for CNS development; negatively regulates glial cell division in the embryonic midline. Involved in the metabolism of insect hormones; responsible for ecdysteroid C22-hydroxylase activity. May be involved in the breakdown of synthetic insecticides.</text>
</comment>
<comment type="catalytic activity">
    <reaction evidence="3">
        <text>2,22-dideoxyecdysone + 2 reduced [adrenodoxin] + O2 + 2 H(+) = 2-deoxyecdysone + 2 oxidized [adrenodoxin] + H2O</text>
        <dbReference type="Rhea" id="RHEA:82055"/>
        <dbReference type="Rhea" id="RHEA-COMP:9998"/>
        <dbReference type="Rhea" id="RHEA-COMP:9999"/>
        <dbReference type="ChEBI" id="CHEBI:15377"/>
        <dbReference type="ChEBI" id="CHEBI:15378"/>
        <dbReference type="ChEBI" id="CHEBI:15379"/>
        <dbReference type="ChEBI" id="CHEBI:19566"/>
        <dbReference type="ChEBI" id="CHEBI:33737"/>
        <dbReference type="ChEBI" id="CHEBI:33738"/>
        <dbReference type="ChEBI" id="CHEBI:80530"/>
        <dbReference type="EC" id="1.14.15.44"/>
    </reaction>
</comment>
<comment type="cofactor">
    <cofactor evidence="1">
        <name>heme</name>
        <dbReference type="ChEBI" id="CHEBI:30413"/>
    </cofactor>
</comment>
<comment type="pathway">
    <text evidence="5">Steroid biosynthesis; ecdysteroid biosynthesis.</text>
</comment>
<comment type="subcellular location">
    <subcellularLocation>
        <location evidence="5">Mitochondrion membrane</location>
    </subcellularLocation>
</comment>
<comment type="tissue specificity">
    <text evidence="2 3">Complex coexpression pattern of dib (disembodied) and sad (shade) in the early embryo that restricts to the prothoracic gland cells of the developing ring gland during late embryogenesis. In larvae and adult, coexpression is seen in prothoracic gland and follicle cells of the ovary. In adults, coexpression is seen in the follicle cells.</text>
</comment>
<comment type="developmental stage">
    <text evidence="2">Expression starts during embryonic blastoderm stages and is absent by stages 12/13. Reappears in stage 16.</text>
</comment>
<comment type="miscellaneous">
    <text>Member of the Halloween gene group.</text>
</comment>
<comment type="similarity">
    <text evidence="7">Belongs to the cytochrome P450 family.</text>
</comment>
<reference key="1">
    <citation type="journal article" date="2000" name="Development">
        <title>The Drosophila disembodied gene controls late embryonic morphogenesis and codes for a cytochrome P450 enzyme that regulates embryonic ecdysone levels.</title>
        <authorList>
            <person name="Chavez V.M."/>
            <person name="Marques G."/>
            <person name="Delbecque J.P."/>
            <person name="Kobayashi K."/>
            <person name="Hollingsworth M."/>
            <person name="Burr J."/>
            <person name="Natzle J.E."/>
            <person name="O'Connor M.B."/>
        </authorList>
    </citation>
    <scope>NUCLEOTIDE SEQUENCE [MRNA]</scope>
    <scope>FUNCTION</scope>
    <scope>CATALYTIC ACTIVITY</scope>
    <scope>TISSUE SPECIFICITY</scope>
    <scope>DEVELOPMENTAL STAGE</scope>
    <source>
        <tissue>Embryo</tissue>
    </source>
</reference>
<reference key="2">
    <citation type="journal article" date="2000" name="Science">
        <title>The genome sequence of Drosophila melanogaster.</title>
        <authorList>
            <person name="Adams M.D."/>
            <person name="Celniker S.E."/>
            <person name="Holt R.A."/>
            <person name="Evans C.A."/>
            <person name="Gocayne J.D."/>
            <person name="Amanatides P.G."/>
            <person name="Scherer S.E."/>
            <person name="Li P.W."/>
            <person name="Hoskins R.A."/>
            <person name="Galle R.F."/>
            <person name="George R.A."/>
            <person name="Lewis S.E."/>
            <person name="Richards S."/>
            <person name="Ashburner M."/>
            <person name="Henderson S.N."/>
            <person name="Sutton G.G."/>
            <person name="Wortman J.R."/>
            <person name="Yandell M.D."/>
            <person name="Zhang Q."/>
            <person name="Chen L.X."/>
            <person name="Brandon R.C."/>
            <person name="Rogers Y.-H.C."/>
            <person name="Blazej R.G."/>
            <person name="Champe M."/>
            <person name="Pfeiffer B.D."/>
            <person name="Wan K.H."/>
            <person name="Doyle C."/>
            <person name="Baxter E.G."/>
            <person name="Helt G."/>
            <person name="Nelson C.R."/>
            <person name="Miklos G.L.G."/>
            <person name="Abril J.F."/>
            <person name="Agbayani A."/>
            <person name="An H.-J."/>
            <person name="Andrews-Pfannkoch C."/>
            <person name="Baldwin D."/>
            <person name="Ballew R.M."/>
            <person name="Basu A."/>
            <person name="Baxendale J."/>
            <person name="Bayraktaroglu L."/>
            <person name="Beasley E.M."/>
            <person name="Beeson K.Y."/>
            <person name="Benos P.V."/>
            <person name="Berman B.P."/>
            <person name="Bhandari D."/>
            <person name="Bolshakov S."/>
            <person name="Borkova D."/>
            <person name="Botchan M.R."/>
            <person name="Bouck J."/>
            <person name="Brokstein P."/>
            <person name="Brottier P."/>
            <person name="Burtis K.C."/>
            <person name="Busam D.A."/>
            <person name="Butler H."/>
            <person name="Cadieu E."/>
            <person name="Center A."/>
            <person name="Chandra I."/>
            <person name="Cherry J.M."/>
            <person name="Cawley S."/>
            <person name="Dahlke C."/>
            <person name="Davenport L.B."/>
            <person name="Davies P."/>
            <person name="de Pablos B."/>
            <person name="Delcher A."/>
            <person name="Deng Z."/>
            <person name="Mays A.D."/>
            <person name="Dew I."/>
            <person name="Dietz S.M."/>
            <person name="Dodson K."/>
            <person name="Doup L.E."/>
            <person name="Downes M."/>
            <person name="Dugan-Rocha S."/>
            <person name="Dunkov B.C."/>
            <person name="Dunn P."/>
            <person name="Durbin K.J."/>
            <person name="Evangelista C.C."/>
            <person name="Ferraz C."/>
            <person name="Ferriera S."/>
            <person name="Fleischmann W."/>
            <person name="Fosler C."/>
            <person name="Gabrielian A.E."/>
            <person name="Garg N.S."/>
            <person name="Gelbart W.M."/>
            <person name="Glasser K."/>
            <person name="Glodek A."/>
            <person name="Gong F."/>
            <person name="Gorrell J.H."/>
            <person name="Gu Z."/>
            <person name="Guan P."/>
            <person name="Harris M."/>
            <person name="Harris N.L."/>
            <person name="Harvey D.A."/>
            <person name="Heiman T.J."/>
            <person name="Hernandez J.R."/>
            <person name="Houck J."/>
            <person name="Hostin D."/>
            <person name="Houston K.A."/>
            <person name="Howland T.J."/>
            <person name="Wei M.-H."/>
            <person name="Ibegwam C."/>
            <person name="Jalali M."/>
            <person name="Kalush F."/>
            <person name="Karpen G.H."/>
            <person name="Ke Z."/>
            <person name="Kennison J.A."/>
            <person name="Ketchum K.A."/>
            <person name="Kimmel B.E."/>
            <person name="Kodira C.D."/>
            <person name="Kraft C.L."/>
            <person name="Kravitz S."/>
            <person name="Kulp D."/>
            <person name="Lai Z."/>
            <person name="Lasko P."/>
            <person name="Lei Y."/>
            <person name="Levitsky A.A."/>
            <person name="Li J.H."/>
            <person name="Li Z."/>
            <person name="Liang Y."/>
            <person name="Lin X."/>
            <person name="Liu X."/>
            <person name="Mattei B."/>
            <person name="McIntosh T.C."/>
            <person name="McLeod M.P."/>
            <person name="McPherson D."/>
            <person name="Merkulov G."/>
            <person name="Milshina N.V."/>
            <person name="Mobarry C."/>
            <person name="Morris J."/>
            <person name="Moshrefi A."/>
            <person name="Mount S.M."/>
            <person name="Moy M."/>
            <person name="Murphy B."/>
            <person name="Murphy L."/>
            <person name="Muzny D.M."/>
            <person name="Nelson D.L."/>
            <person name="Nelson D.R."/>
            <person name="Nelson K.A."/>
            <person name="Nixon K."/>
            <person name="Nusskern D.R."/>
            <person name="Pacleb J.M."/>
            <person name="Palazzolo M."/>
            <person name="Pittman G.S."/>
            <person name="Pan S."/>
            <person name="Pollard J."/>
            <person name="Puri V."/>
            <person name="Reese M.G."/>
            <person name="Reinert K."/>
            <person name="Remington K."/>
            <person name="Saunders R.D.C."/>
            <person name="Scheeler F."/>
            <person name="Shen H."/>
            <person name="Shue B.C."/>
            <person name="Siden-Kiamos I."/>
            <person name="Simpson M."/>
            <person name="Skupski M.P."/>
            <person name="Smith T.J."/>
            <person name="Spier E."/>
            <person name="Spradling A.C."/>
            <person name="Stapleton M."/>
            <person name="Strong R."/>
            <person name="Sun E."/>
            <person name="Svirskas R."/>
            <person name="Tector C."/>
            <person name="Turner R."/>
            <person name="Venter E."/>
            <person name="Wang A.H."/>
            <person name="Wang X."/>
            <person name="Wang Z.-Y."/>
            <person name="Wassarman D.A."/>
            <person name="Weinstock G.M."/>
            <person name="Weissenbach J."/>
            <person name="Williams S.M."/>
            <person name="Woodage T."/>
            <person name="Worley K.C."/>
            <person name="Wu D."/>
            <person name="Yang S."/>
            <person name="Yao Q.A."/>
            <person name="Ye J."/>
            <person name="Yeh R.-F."/>
            <person name="Zaveri J.S."/>
            <person name="Zhan M."/>
            <person name="Zhang G."/>
            <person name="Zhao Q."/>
            <person name="Zheng L."/>
            <person name="Zheng X.H."/>
            <person name="Zhong F.N."/>
            <person name="Zhong W."/>
            <person name="Zhou X."/>
            <person name="Zhu S.C."/>
            <person name="Zhu X."/>
            <person name="Smith H.O."/>
            <person name="Gibbs R.A."/>
            <person name="Myers E.W."/>
            <person name="Rubin G.M."/>
            <person name="Venter J.C."/>
        </authorList>
    </citation>
    <scope>NUCLEOTIDE SEQUENCE [LARGE SCALE GENOMIC DNA]</scope>
    <source>
        <strain>Berkeley</strain>
    </source>
</reference>
<reference key="3">
    <citation type="journal article" date="2002" name="Genome Biol.">
        <title>Annotation of the Drosophila melanogaster euchromatic genome: a systematic review.</title>
        <authorList>
            <person name="Misra S."/>
            <person name="Crosby M.A."/>
            <person name="Mungall C.J."/>
            <person name="Matthews B.B."/>
            <person name="Campbell K.S."/>
            <person name="Hradecky P."/>
            <person name="Huang Y."/>
            <person name="Kaminker J.S."/>
            <person name="Millburn G.H."/>
            <person name="Prochnik S.E."/>
            <person name="Smith C.D."/>
            <person name="Tupy J.L."/>
            <person name="Whitfield E.J."/>
            <person name="Bayraktaroglu L."/>
            <person name="Berman B.P."/>
            <person name="Bettencourt B.R."/>
            <person name="Celniker S.E."/>
            <person name="de Grey A.D.N.J."/>
            <person name="Drysdale R.A."/>
            <person name="Harris N.L."/>
            <person name="Richter J."/>
            <person name="Russo S."/>
            <person name="Schroeder A.J."/>
            <person name="Shu S.Q."/>
            <person name="Stapleton M."/>
            <person name="Yamada C."/>
            <person name="Ashburner M."/>
            <person name="Gelbart W.M."/>
            <person name="Rubin G.M."/>
            <person name="Lewis S.E."/>
        </authorList>
    </citation>
    <scope>GENOME REANNOTATION</scope>
    <source>
        <strain>Berkeley</strain>
    </source>
</reference>
<reference key="4">
    <citation type="submission" date="2006-10" db="EMBL/GenBank/DDBJ databases">
        <authorList>
            <person name="Stapleton M."/>
            <person name="Carlson J.W."/>
            <person name="Frise E."/>
            <person name="Kapadia B."/>
            <person name="Park S."/>
            <person name="Wan K.H."/>
            <person name="Yu C."/>
            <person name="Celniker S.E."/>
        </authorList>
    </citation>
    <scope>NUCLEOTIDE SEQUENCE [LARGE SCALE MRNA]</scope>
    <source>
        <strain>Berkeley</strain>
    </source>
</reference>
<reference key="5">
    <citation type="journal article" date="2002" name="Proc. Natl. Acad. Sci. U.S.A.">
        <title>Molecular and biochemical characterization of two P450 enzymes in the ecdysteroidogenic pathway of Drosophila melanogaster.</title>
        <authorList>
            <person name="Warren J.T."/>
            <person name="Petryk A."/>
            <person name="Marques G."/>
            <person name="Jarcho M.P."/>
            <person name="Parvy J.-P."/>
            <person name="Dauphin-Villemant C."/>
            <person name="O'Connor M.B."/>
            <person name="Gilbert L.I."/>
        </authorList>
    </citation>
    <scope>FUNCTION</scope>
    <scope>CATALYTIC ACTIVITY</scope>
    <scope>TISSUE SPECIFICITY</scope>
</reference>
<reference key="6">
    <citation type="journal article" date="2003" name="Mech. Dev.">
        <title>Regulation of glial cell number and differentiation by ecdysone and Fos signaling.</title>
        <authorList>
            <person name="Giesen K."/>
            <person name="Lammel U."/>
            <person name="Langehans D."/>
            <person name="Krukkert K."/>
            <person name="Bunse I."/>
            <person name="Klambt C."/>
        </authorList>
    </citation>
    <scope>FUNCTION</scope>
</reference>
<reference key="7">
    <citation type="journal article" date="2003" name="Proc. Natl. Acad. Sci. U.S.A.">
        <title>Shade is the Drosophila P450 enzyme that mediates the hydroxylation of ecdysone to the steroid insect molting hormone 20-hydroxyecdysone.</title>
        <authorList>
            <person name="Petryk A."/>
            <person name="Warren J.T."/>
            <person name="Marques G."/>
            <person name="Jarcho M.P."/>
            <person name="Gilbert L.I."/>
            <person name="Kahler J."/>
            <person name="Parvy J.-P."/>
            <person name="Li Y."/>
            <person name="Dauphin-Villemant C."/>
            <person name="O'Connor M.B."/>
        </authorList>
    </citation>
    <scope>SUBCELLULAR LOCATION</scope>
    <scope>PATHWAY</scope>
</reference>
<protein>
    <recommendedName>
        <fullName>Cytochrome P450 302a1, mitochondrial</fullName>
        <ecNumber evidence="3">1.14.15.44</ecNumber>
    </recommendedName>
    <alternativeName>
        <fullName evidence="6">Protein disembodied</fullName>
    </alternativeName>
</protein>
<evidence type="ECO:0000250" key="1">
    <source>
        <dbReference type="UniProtKB" id="P04798"/>
    </source>
</evidence>
<evidence type="ECO:0000269" key="2">
    <source>
    </source>
</evidence>
<evidence type="ECO:0000269" key="3">
    <source>
    </source>
</evidence>
<evidence type="ECO:0000269" key="4">
    <source>
    </source>
</evidence>
<evidence type="ECO:0000269" key="5">
    <source>
    </source>
</evidence>
<evidence type="ECO:0000303" key="6">
    <source>
    </source>
</evidence>
<evidence type="ECO:0000305" key="7"/>
<evidence type="ECO:0000312" key="8">
    <source>
        <dbReference type="FlyBase" id="FBgn0000449"/>
    </source>
</evidence>
<dbReference type="EC" id="1.14.15.44" evidence="3"/>
<dbReference type="EMBL" id="AF237560">
    <property type="protein sequence ID" value="AAF60174.1"/>
    <property type="molecule type" value="mRNA"/>
</dbReference>
<dbReference type="EMBL" id="AE014296">
    <property type="protein sequence ID" value="AAF47831.2"/>
    <property type="molecule type" value="Genomic_DNA"/>
</dbReference>
<dbReference type="EMBL" id="BT029035">
    <property type="protein sequence ID" value="ABJ16968.1"/>
    <property type="molecule type" value="mRNA"/>
</dbReference>
<dbReference type="RefSeq" id="NP_524810.2">
    <property type="nucleotide sequence ID" value="NM_080071.3"/>
</dbReference>
<dbReference type="SMR" id="Q9NGX9"/>
<dbReference type="FunCoup" id="Q9NGX9">
    <property type="interactions" value="35"/>
</dbReference>
<dbReference type="STRING" id="7227.FBpp0073061"/>
<dbReference type="PaxDb" id="7227-FBpp0073061"/>
<dbReference type="DNASU" id="45282"/>
<dbReference type="EnsemblMetazoa" id="FBtr0073205">
    <property type="protein sequence ID" value="FBpp0073061"/>
    <property type="gene ID" value="FBgn0000449"/>
</dbReference>
<dbReference type="GeneID" id="45282"/>
<dbReference type="KEGG" id="dme:Dmel_CG12028"/>
<dbReference type="AGR" id="FB:FBgn0000449"/>
<dbReference type="CTD" id="45282"/>
<dbReference type="FlyBase" id="FBgn0000449">
    <property type="gene designation" value="dib"/>
</dbReference>
<dbReference type="VEuPathDB" id="VectorBase:FBgn0000449"/>
<dbReference type="eggNOG" id="KOG0159">
    <property type="taxonomic scope" value="Eukaryota"/>
</dbReference>
<dbReference type="HOGENOM" id="CLU_001570_28_0_1"/>
<dbReference type="InParanoid" id="Q9NGX9"/>
<dbReference type="OMA" id="MACDMLL"/>
<dbReference type="OrthoDB" id="3945418at2759"/>
<dbReference type="PhylomeDB" id="Q9NGX9"/>
<dbReference type="BioCyc" id="MetaCyc:MONOMER-18110"/>
<dbReference type="UniPathway" id="UPA00765"/>
<dbReference type="BioGRID-ORCS" id="45282">
    <property type="hits" value="0 hits in 1 CRISPR screen"/>
</dbReference>
<dbReference type="GenomeRNAi" id="45282"/>
<dbReference type="PRO" id="PR:Q9NGX9"/>
<dbReference type="Proteomes" id="UP000000803">
    <property type="component" value="Chromosome 3L"/>
</dbReference>
<dbReference type="Bgee" id="FBgn0000449">
    <property type="expression patterns" value="Expressed in ring gland and 9 other cell types or tissues"/>
</dbReference>
<dbReference type="GO" id="GO:0031966">
    <property type="term" value="C:mitochondrial membrane"/>
    <property type="evidence" value="ECO:0007669"/>
    <property type="project" value="UniProtKB-SubCell"/>
</dbReference>
<dbReference type="GO" id="GO:0005739">
    <property type="term" value="C:mitochondrion"/>
    <property type="evidence" value="ECO:0000314"/>
    <property type="project" value="FlyBase"/>
</dbReference>
<dbReference type="GO" id="GO:0042767">
    <property type="term" value="F:ecdysteroid 22-hydroxylase activity"/>
    <property type="evidence" value="ECO:0000314"/>
    <property type="project" value="FlyBase"/>
</dbReference>
<dbReference type="GO" id="GO:0020037">
    <property type="term" value="F:heme binding"/>
    <property type="evidence" value="ECO:0007669"/>
    <property type="project" value="InterPro"/>
</dbReference>
<dbReference type="GO" id="GO:0005506">
    <property type="term" value="F:iron ion binding"/>
    <property type="evidence" value="ECO:0007669"/>
    <property type="project" value="InterPro"/>
</dbReference>
<dbReference type="GO" id="GO:0007417">
    <property type="term" value="P:central nervous system development"/>
    <property type="evidence" value="ECO:0000315"/>
    <property type="project" value="FlyBase"/>
</dbReference>
<dbReference type="GO" id="GO:0008362">
    <property type="term" value="P:chitin-based embryonic cuticle biosynthetic process"/>
    <property type="evidence" value="ECO:0000315"/>
    <property type="project" value="FlyBase"/>
</dbReference>
<dbReference type="GO" id="GO:0007391">
    <property type="term" value="P:dorsal closure"/>
    <property type="evidence" value="ECO:0000315"/>
    <property type="project" value="FlyBase"/>
</dbReference>
<dbReference type="GO" id="GO:0006697">
    <property type="term" value="P:ecdysone biosynthetic process"/>
    <property type="evidence" value="ECO:0000314"/>
    <property type="project" value="FlyBase"/>
</dbReference>
<dbReference type="GO" id="GO:0008258">
    <property type="term" value="P:head involution"/>
    <property type="evidence" value="ECO:0000315"/>
    <property type="project" value="FlyBase"/>
</dbReference>
<dbReference type="GO" id="GO:0007494">
    <property type="term" value="P:midgut development"/>
    <property type="evidence" value="ECO:0000315"/>
    <property type="project" value="FlyBase"/>
</dbReference>
<dbReference type="CDD" id="cd11054">
    <property type="entry name" value="CYP24A1-like"/>
    <property type="match status" value="1"/>
</dbReference>
<dbReference type="FunFam" id="1.10.630.10:FF:000006">
    <property type="entry name" value="Cytochrome P450 302a1, mitochondrial"/>
    <property type="match status" value="1"/>
</dbReference>
<dbReference type="Gene3D" id="1.10.630.10">
    <property type="entry name" value="Cytochrome P450"/>
    <property type="match status" value="1"/>
</dbReference>
<dbReference type="InterPro" id="IPR050479">
    <property type="entry name" value="CYP11_CYP27_families"/>
</dbReference>
<dbReference type="InterPro" id="IPR001128">
    <property type="entry name" value="Cyt_P450"/>
</dbReference>
<dbReference type="InterPro" id="IPR017972">
    <property type="entry name" value="Cyt_P450_CS"/>
</dbReference>
<dbReference type="InterPro" id="IPR002401">
    <property type="entry name" value="Cyt_P450_E_grp-I"/>
</dbReference>
<dbReference type="InterPro" id="IPR036396">
    <property type="entry name" value="Cyt_P450_sf"/>
</dbReference>
<dbReference type="PANTHER" id="PTHR24279">
    <property type="entry name" value="CYTOCHROME P450"/>
    <property type="match status" value="1"/>
</dbReference>
<dbReference type="PANTHER" id="PTHR24279:SF120">
    <property type="entry name" value="CYTOCHROME P450"/>
    <property type="match status" value="1"/>
</dbReference>
<dbReference type="Pfam" id="PF00067">
    <property type="entry name" value="p450"/>
    <property type="match status" value="1"/>
</dbReference>
<dbReference type="PRINTS" id="PR00463">
    <property type="entry name" value="EP450I"/>
</dbReference>
<dbReference type="PRINTS" id="PR00385">
    <property type="entry name" value="P450"/>
</dbReference>
<dbReference type="SUPFAM" id="SSF48264">
    <property type="entry name" value="Cytochrome P450"/>
    <property type="match status" value="1"/>
</dbReference>
<dbReference type="PROSITE" id="PS00086">
    <property type="entry name" value="CYTOCHROME_P450"/>
    <property type="match status" value="1"/>
</dbReference>
<accession>Q9NGX9</accession>
<accession>Q059D3</accession>
<accession>Q9VZJ0</accession>
<gene>
    <name evidence="6 8" type="primary">dib</name>
    <name type="synonym">CYP302A1</name>
    <name type="ORF">CG12028</name>
</gene>
<feature type="transit peptide" description="Mitochondrion">
    <location>
        <begin position="1"/>
        <end status="unknown"/>
    </location>
</feature>
<feature type="chain" id="PRO_0000003629" description="Cytochrome P450 302a1, mitochondrial">
    <location>
        <begin status="unknown"/>
        <end position="489"/>
    </location>
</feature>
<feature type="binding site" description="axial binding residue" evidence="1">
    <location>
        <position position="434"/>
    </location>
    <ligand>
        <name>heme</name>
        <dbReference type="ChEBI" id="CHEBI:30413"/>
    </ligand>
    <ligandPart>
        <name>Fe</name>
        <dbReference type="ChEBI" id="CHEBI:18248"/>
    </ligandPart>
</feature>
<feature type="sequence conflict" description="In Ref. 1; AAF60174." evidence="7" ref="1">
    <original>C</original>
    <variation>S</variation>
    <location>
        <position position="186"/>
    </location>
</feature>
<feature type="sequence conflict" description="In Ref. 1; AAF60174." evidence="7" ref="1">
    <original>R</original>
    <variation>S</variation>
    <location>
        <position position="205"/>
    </location>
</feature>
<feature type="sequence conflict" description="In Ref. 1; AAF60174." evidence="7" ref="1">
    <original>S</original>
    <variation>G</variation>
    <location>
        <position position="252"/>
    </location>
</feature>
<feature type="sequence conflict" description="In Ref. 1; AAF60174." evidence="7" ref="1">
    <original>L</original>
    <variation>M</variation>
    <location>
        <position position="255"/>
    </location>
</feature>
<feature type="sequence conflict" description="In Ref. 1; AAF60174." evidence="7" ref="1">
    <original>R</original>
    <variation>K</variation>
    <location>
        <position position="327"/>
    </location>
</feature>
<feature type="sequence conflict" description="In Ref. 1; AAF60174." evidence="7" ref="1">
    <original>A</original>
    <variation>R</variation>
    <location>
        <position position="394"/>
    </location>
</feature>
<keyword id="KW-0349">Heme</keyword>
<keyword id="KW-0408">Iron</keyword>
<keyword id="KW-0472">Membrane</keyword>
<keyword id="KW-0479">Metal-binding</keyword>
<keyword id="KW-0496">Mitochondrion</keyword>
<keyword id="KW-0503">Monooxygenase</keyword>
<keyword id="KW-0560">Oxidoreductase</keyword>
<keyword id="KW-1185">Reference proteome</keyword>
<keyword id="KW-0809">Transit peptide</keyword>
<sequence length="489" mass="55574">MLTKLLKISCTSRQCTFAKPYQAIPGPRGPFGMGNLYNYLPGIGSYSWLRLHQAGQDKYEKYGAIVRETIVPGQDIVWLYDPKDIALLLNERDCPQRRSHLALAQYRKSRPDVYKTTGLLPTNGPEWWRIRAQVQKELSAPKSVRNFVRQVDGVTKEFIRFLQESRNGGAIDMLPKLTRLNLELTCLLTFGARLQSFTAQEQDPRSRSTRLMDAAETTNSCILPTDQGLQLWRFLETPSFRKLSQAQSYMESVALELVEENVRNGSVGSSLISAYVKNPELDRSDVVGTAADLLLAGIDTTSYASAFLLYHIARNPEVQQKLHEEARRVLPSAKDELSMDALRTDITYTRAVLKESLRLNPIAVGVGRILNQDAIFSGYFVPKGTTVVTQNMVACRLEQHFQDPLRFQPDRWLQHRSALNPYLVLPFGHGMRACIARRLAEQNMHILLLRLLREYELIWSGSDDEMGVKTLLINKPDAPVLIDLRLRRE</sequence>
<organism>
    <name type="scientific">Drosophila melanogaster</name>
    <name type="common">Fruit fly</name>
    <dbReference type="NCBI Taxonomy" id="7227"/>
    <lineage>
        <taxon>Eukaryota</taxon>
        <taxon>Metazoa</taxon>
        <taxon>Ecdysozoa</taxon>
        <taxon>Arthropoda</taxon>
        <taxon>Hexapoda</taxon>
        <taxon>Insecta</taxon>
        <taxon>Pterygota</taxon>
        <taxon>Neoptera</taxon>
        <taxon>Endopterygota</taxon>
        <taxon>Diptera</taxon>
        <taxon>Brachycera</taxon>
        <taxon>Muscomorpha</taxon>
        <taxon>Ephydroidea</taxon>
        <taxon>Drosophilidae</taxon>
        <taxon>Drosophila</taxon>
        <taxon>Sophophora</taxon>
    </lineage>
</organism>
<proteinExistence type="evidence at protein level"/>